<keyword id="KW-0472">Membrane</keyword>
<keyword id="KW-0496">Mitochondrion</keyword>
<keyword id="KW-0999">Mitochondrion inner membrane</keyword>
<keyword id="KW-1185">Reference proteome</keyword>
<keyword id="KW-0812">Transmembrane</keyword>
<keyword id="KW-1133">Transmembrane helix</keyword>
<reference key="1">
    <citation type="journal article" date="2002" name="Nature">
        <title>The genome sequence of Schizosaccharomyces pombe.</title>
        <authorList>
            <person name="Wood V."/>
            <person name="Gwilliam R."/>
            <person name="Rajandream M.A."/>
            <person name="Lyne M.H."/>
            <person name="Lyne R."/>
            <person name="Stewart A."/>
            <person name="Sgouros J.G."/>
            <person name="Peat N."/>
            <person name="Hayles J."/>
            <person name="Baker S.G."/>
            <person name="Basham D."/>
            <person name="Bowman S."/>
            <person name="Brooks K."/>
            <person name="Brown D."/>
            <person name="Brown S."/>
            <person name="Chillingworth T."/>
            <person name="Churcher C.M."/>
            <person name="Collins M."/>
            <person name="Connor R."/>
            <person name="Cronin A."/>
            <person name="Davis P."/>
            <person name="Feltwell T."/>
            <person name="Fraser A."/>
            <person name="Gentles S."/>
            <person name="Goble A."/>
            <person name="Hamlin N."/>
            <person name="Harris D.E."/>
            <person name="Hidalgo J."/>
            <person name="Hodgson G."/>
            <person name="Holroyd S."/>
            <person name="Hornsby T."/>
            <person name="Howarth S."/>
            <person name="Huckle E.J."/>
            <person name="Hunt S."/>
            <person name="Jagels K."/>
            <person name="James K.D."/>
            <person name="Jones L."/>
            <person name="Jones M."/>
            <person name="Leather S."/>
            <person name="McDonald S."/>
            <person name="McLean J."/>
            <person name="Mooney P."/>
            <person name="Moule S."/>
            <person name="Mungall K.L."/>
            <person name="Murphy L.D."/>
            <person name="Niblett D."/>
            <person name="Odell C."/>
            <person name="Oliver K."/>
            <person name="O'Neil S."/>
            <person name="Pearson D."/>
            <person name="Quail M.A."/>
            <person name="Rabbinowitsch E."/>
            <person name="Rutherford K.M."/>
            <person name="Rutter S."/>
            <person name="Saunders D."/>
            <person name="Seeger K."/>
            <person name="Sharp S."/>
            <person name="Skelton J."/>
            <person name="Simmonds M.N."/>
            <person name="Squares R."/>
            <person name="Squares S."/>
            <person name="Stevens K."/>
            <person name="Taylor K."/>
            <person name="Taylor R.G."/>
            <person name="Tivey A."/>
            <person name="Walsh S.V."/>
            <person name="Warren T."/>
            <person name="Whitehead S."/>
            <person name="Woodward J.R."/>
            <person name="Volckaert G."/>
            <person name="Aert R."/>
            <person name="Robben J."/>
            <person name="Grymonprez B."/>
            <person name="Weltjens I."/>
            <person name="Vanstreels E."/>
            <person name="Rieger M."/>
            <person name="Schaefer M."/>
            <person name="Mueller-Auer S."/>
            <person name="Gabel C."/>
            <person name="Fuchs M."/>
            <person name="Duesterhoeft A."/>
            <person name="Fritzc C."/>
            <person name="Holzer E."/>
            <person name="Moestl D."/>
            <person name="Hilbert H."/>
            <person name="Borzym K."/>
            <person name="Langer I."/>
            <person name="Beck A."/>
            <person name="Lehrach H."/>
            <person name="Reinhardt R."/>
            <person name="Pohl T.M."/>
            <person name="Eger P."/>
            <person name="Zimmermann W."/>
            <person name="Wedler H."/>
            <person name="Wambutt R."/>
            <person name="Purnelle B."/>
            <person name="Goffeau A."/>
            <person name="Cadieu E."/>
            <person name="Dreano S."/>
            <person name="Gloux S."/>
            <person name="Lelaure V."/>
            <person name="Mottier S."/>
            <person name="Galibert F."/>
            <person name="Aves S.J."/>
            <person name="Xiang Z."/>
            <person name="Hunt C."/>
            <person name="Moore K."/>
            <person name="Hurst S.M."/>
            <person name="Lucas M."/>
            <person name="Rochet M."/>
            <person name="Gaillardin C."/>
            <person name="Tallada V.A."/>
            <person name="Garzon A."/>
            <person name="Thode G."/>
            <person name="Daga R.R."/>
            <person name="Cruzado L."/>
            <person name="Jimenez J."/>
            <person name="Sanchez M."/>
            <person name="del Rey F."/>
            <person name="Benito J."/>
            <person name="Dominguez A."/>
            <person name="Revuelta J.L."/>
            <person name="Moreno S."/>
            <person name="Armstrong J."/>
            <person name="Forsburg S.L."/>
            <person name="Cerutti L."/>
            <person name="Lowe T."/>
            <person name="McCombie W.R."/>
            <person name="Paulsen I."/>
            <person name="Potashkin J."/>
            <person name="Shpakovski G.V."/>
            <person name="Ussery D."/>
            <person name="Barrell B.G."/>
            <person name="Nurse P."/>
        </authorList>
    </citation>
    <scope>NUCLEOTIDE SEQUENCE [LARGE SCALE GENOMIC DNA]</scope>
    <source>
        <strain>972 / ATCC 24843</strain>
    </source>
</reference>
<reference key="2">
    <citation type="journal article" date="2011" name="Genetics">
        <title>Augmented annotation of the Schizosaccharomyces pombe genome reveals additional genes required for growth and viability.</title>
        <authorList>
            <person name="Bitton D.A."/>
            <person name="Wood V."/>
            <person name="Scutt P.J."/>
            <person name="Grallert A."/>
            <person name="Yates T."/>
            <person name="Smith D.L."/>
            <person name="Hagan I.M."/>
            <person name="Miller C.J."/>
        </authorList>
    </citation>
    <scope>IDENTIFICATION</scope>
    <scope>INDUCTION</scope>
</reference>
<sequence length="69" mass="7883">MNQGNQAFENARKPFRRANLITALGLGAFAFATFAYSVYRVHEDTFEDVVMTPELEKKIAEDRDLSKKN</sequence>
<evidence type="ECO:0000250" key="1"/>
<evidence type="ECO:0000255" key="2"/>
<evidence type="ECO:0000269" key="3">
    <source>
    </source>
</evidence>
<evidence type="ECO:0000305" key="4"/>
<feature type="chain" id="PRO_0000416512" description="Cytochrome c oxidase assembly factor 3, mitochondrial">
    <location>
        <begin position="1"/>
        <end position="69"/>
    </location>
</feature>
<feature type="topological domain" description="Mitochondrial matrix" evidence="2">
    <location>
        <begin position="1"/>
        <end position="19"/>
    </location>
</feature>
<feature type="transmembrane region" description="Helical" evidence="2">
    <location>
        <begin position="20"/>
        <end position="42"/>
    </location>
</feature>
<feature type="topological domain" description="Mitochondrial intermembrane" evidence="2">
    <location>
        <begin position="43"/>
        <end position="69"/>
    </location>
</feature>
<accession>G2TRJ9</accession>
<gene>
    <name type="primary">coa3</name>
    <name type="synonym">tam3</name>
    <name type="ORF">SPAC1B3.21</name>
</gene>
<name>COA3_SCHPO</name>
<comment type="function">
    <text evidence="1">Required for assembly of cytochrome c oxidase (complex IV).</text>
</comment>
<comment type="subunit">
    <text evidence="1">Component of 250-400 kDa complexes called cytochrome oxidase assembly intermediates or COA complexes.</text>
</comment>
<comment type="subcellular location">
    <subcellularLocation>
        <location evidence="1">Mitochondrion inner membrane</location>
        <topology evidence="1">Single-pass membrane protein</topology>
    </subcellularLocation>
</comment>
<comment type="induction">
    <text evidence="3">Differentially expressed during meiosis.</text>
</comment>
<comment type="similarity">
    <text evidence="4">Belongs to the COA3 family.</text>
</comment>
<dbReference type="EMBL" id="CU329670">
    <property type="protein sequence ID" value="CCD31342.1"/>
    <property type="molecule type" value="Genomic_DNA"/>
</dbReference>
<dbReference type="RefSeq" id="XP_004001797.1">
    <property type="nucleotide sequence ID" value="XM_004001748.1"/>
</dbReference>
<dbReference type="SMR" id="G2TRJ9"/>
<dbReference type="STRING" id="284812.G2TRJ9"/>
<dbReference type="PaxDb" id="4896-SPAC1B3.21.1"/>
<dbReference type="EnsemblFungi" id="SPAC1B3.21.1">
    <property type="protein sequence ID" value="SPAC1B3.21.1:pep"/>
    <property type="gene ID" value="SPAC1B3.21"/>
</dbReference>
<dbReference type="PomBase" id="SPAC1B3.21">
    <property type="gene designation" value="coa3"/>
</dbReference>
<dbReference type="VEuPathDB" id="FungiDB:SPAC1B3.21"/>
<dbReference type="HOGENOM" id="CLU_202744_0_0_1"/>
<dbReference type="InParanoid" id="G2TRJ9"/>
<dbReference type="OMA" id="RVHEDTF"/>
<dbReference type="PRO" id="PR:G2TRJ9"/>
<dbReference type="Proteomes" id="UP000002485">
    <property type="component" value="Chromosome I"/>
</dbReference>
<dbReference type="GO" id="GO:0005743">
    <property type="term" value="C:mitochondrial inner membrane"/>
    <property type="evidence" value="ECO:0000318"/>
    <property type="project" value="GO_Central"/>
</dbReference>
<dbReference type="GO" id="GO:0033617">
    <property type="term" value="P:mitochondrial cytochrome c oxidase assembly"/>
    <property type="evidence" value="ECO:0000318"/>
    <property type="project" value="GO_Central"/>
</dbReference>
<dbReference type="InterPro" id="IPR041752">
    <property type="entry name" value="Coa3"/>
</dbReference>
<dbReference type="InterPro" id="IPR018628">
    <property type="entry name" value="Coa3_cc"/>
</dbReference>
<dbReference type="PANTHER" id="PTHR15642:SF3">
    <property type="entry name" value="CYTOCHROME C OXIDASE ASSEMBLY FACTOR 3 HOMOLOG, MITOCHONDRIAL"/>
    <property type="match status" value="1"/>
</dbReference>
<dbReference type="PANTHER" id="PTHR15642">
    <property type="entry name" value="CYTOCHROME C OXIDASE ASSEMBLY FACTOR 3, MITOCHONDRIAL"/>
    <property type="match status" value="1"/>
</dbReference>
<dbReference type="Pfam" id="PF09813">
    <property type="entry name" value="Coa3_cc"/>
    <property type="match status" value="1"/>
</dbReference>
<organism>
    <name type="scientific">Schizosaccharomyces pombe (strain 972 / ATCC 24843)</name>
    <name type="common">Fission yeast</name>
    <dbReference type="NCBI Taxonomy" id="284812"/>
    <lineage>
        <taxon>Eukaryota</taxon>
        <taxon>Fungi</taxon>
        <taxon>Dikarya</taxon>
        <taxon>Ascomycota</taxon>
        <taxon>Taphrinomycotina</taxon>
        <taxon>Schizosaccharomycetes</taxon>
        <taxon>Schizosaccharomycetales</taxon>
        <taxon>Schizosaccharomycetaceae</taxon>
        <taxon>Schizosaccharomyces</taxon>
    </lineage>
</organism>
<protein>
    <recommendedName>
        <fullName>Cytochrome c oxidase assembly factor 3, mitochondrial</fullName>
    </recommendedName>
    <alternativeName>
        <fullName>Transcripts altered in meiosis protein 3</fullName>
    </alternativeName>
</protein>
<proteinExistence type="evidence at transcript level"/>